<feature type="chain" id="PRO_1000211778" description="ATP synthase epsilon chain">
    <location>
        <begin position="1"/>
        <end position="133"/>
    </location>
</feature>
<name>ATPE_CLOB6</name>
<proteinExistence type="inferred from homology"/>
<accession>C3KYJ4</accession>
<reference key="1">
    <citation type="submission" date="2008-05" db="EMBL/GenBank/DDBJ databases">
        <title>Genome sequence of Clostridium botulinum Ba4 strain 657.</title>
        <authorList>
            <person name="Shrivastava S."/>
            <person name="Brown J.L."/>
            <person name="Bruce D."/>
            <person name="Detter C."/>
            <person name="Munk C."/>
            <person name="Smith L.A."/>
            <person name="Smith T.J."/>
            <person name="Sutton G."/>
            <person name="Brettin T.S."/>
        </authorList>
    </citation>
    <scope>NUCLEOTIDE SEQUENCE [LARGE SCALE GENOMIC DNA]</scope>
    <source>
        <strain>657 / Type Ba4</strain>
    </source>
</reference>
<dbReference type="EMBL" id="CP001083">
    <property type="protein sequence ID" value="ACQ52772.1"/>
    <property type="molecule type" value="Genomic_DNA"/>
</dbReference>
<dbReference type="RefSeq" id="WP_003356141.1">
    <property type="nucleotide sequence ID" value="NC_012658.1"/>
</dbReference>
<dbReference type="SMR" id="C3KYJ4"/>
<dbReference type="KEGG" id="cbi:CLJ_B0196"/>
<dbReference type="HOGENOM" id="CLU_084338_1_1_9"/>
<dbReference type="Proteomes" id="UP000002333">
    <property type="component" value="Chromosome"/>
</dbReference>
<dbReference type="GO" id="GO:0005886">
    <property type="term" value="C:plasma membrane"/>
    <property type="evidence" value="ECO:0007669"/>
    <property type="project" value="UniProtKB-SubCell"/>
</dbReference>
<dbReference type="GO" id="GO:0045259">
    <property type="term" value="C:proton-transporting ATP synthase complex"/>
    <property type="evidence" value="ECO:0007669"/>
    <property type="project" value="UniProtKB-KW"/>
</dbReference>
<dbReference type="GO" id="GO:0005524">
    <property type="term" value="F:ATP binding"/>
    <property type="evidence" value="ECO:0007669"/>
    <property type="project" value="UniProtKB-UniRule"/>
</dbReference>
<dbReference type="GO" id="GO:0046933">
    <property type="term" value="F:proton-transporting ATP synthase activity, rotational mechanism"/>
    <property type="evidence" value="ECO:0007669"/>
    <property type="project" value="UniProtKB-UniRule"/>
</dbReference>
<dbReference type="CDD" id="cd12152">
    <property type="entry name" value="F1-ATPase_delta"/>
    <property type="match status" value="1"/>
</dbReference>
<dbReference type="Gene3D" id="1.20.5.440">
    <property type="entry name" value="ATP synthase delta/epsilon subunit, C-terminal domain"/>
    <property type="match status" value="1"/>
</dbReference>
<dbReference type="Gene3D" id="2.60.15.10">
    <property type="entry name" value="F0F1 ATP synthase delta/epsilon subunit, N-terminal"/>
    <property type="match status" value="1"/>
</dbReference>
<dbReference type="HAMAP" id="MF_00530">
    <property type="entry name" value="ATP_synth_epsil_bac"/>
    <property type="match status" value="1"/>
</dbReference>
<dbReference type="InterPro" id="IPR036794">
    <property type="entry name" value="ATP_F1_dsu/esu_C_sf"/>
</dbReference>
<dbReference type="InterPro" id="IPR001469">
    <property type="entry name" value="ATP_synth_F1_dsu/esu"/>
</dbReference>
<dbReference type="InterPro" id="IPR020546">
    <property type="entry name" value="ATP_synth_F1_dsu/esu_N"/>
</dbReference>
<dbReference type="InterPro" id="IPR020547">
    <property type="entry name" value="ATP_synth_F1_esu_C"/>
</dbReference>
<dbReference type="InterPro" id="IPR036771">
    <property type="entry name" value="ATPsynth_dsu/esu_N"/>
</dbReference>
<dbReference type="NCBIfam" id="TIGR01216">
    <property type="entry name" value="ATP_synt_epsi"/>
    <property type="match status" value="1"/>
</dbReference>
<dbReference type="NCBIfam" id="NF009984">
    <property type="entry name" value="PRK13450.1"/>
    <property type="match status" value="1"/>
</dbReference>
<dbReference type="PANTHER" id="PTHR13822">
    <property type="entry name" value="ATP SYNTHASE DELTA/EPSILON CHAIN"/>
    <property type="match status" value="1"/>
</dbReference>
<dbReference type="PANTHER" id="PTHR13822:SF10">
    <property type="entry name" value="ATP SYNTHASE EPSILON CHAIN, CHLOROPLASTIC"/>
    <property type="match status" value="1"/>
</dbReference>
<dbReference type="Pfam" id="PF00401">
    <property type="entry name" value="ATP-synt_DE"/>
    <property type="match status" value="1"/>
</dbReference>
<dbReference type="Pfam" id="PF02823">
    <property type="entry name" value="ATP-synt_DE_N"/>
    <property type="match status" value="1"/>
</dbReference>
<dbReference type="SUPFAM" id="SSF46604">
    <property type="entry name" value="Epsilon subunit of F1F0-ATP synthase C-terminal domain"/>
    <property type="match status" value="1"/>
</dbReference>
<dbReference type="SUPFAM" id="SSF51344">
    <property type="entry name" value="Epsilon subunit of F1F0-ATP synthase N-terminal domain"/>
    <property type="match status" value="1"/>
</dbReference>
<protein>
    <recommendedName>
        <fullName evidence="1">ATP synthase epsilon chain</fullName>
    </recommendedName>
    <alternativeName>
        <fullName evidence="1">ATP synthase F1 sector epsilon subunit</fullName>
    </alternativeName>
    <alternativeName>
        <fullName evidence="1">F-ATPase epsilon subunit</fullName>
    </alternativeName>
</protein>
<evidence type="ECO:0000255" key="1">
    <source>
        <dbReference type="HAMAP-Rule" id="MF_00530"/>
    </source>
</evidence>
<organism>
    <name type="scientific">Clostridium botulinum (strain 657 / Type Ba4)</name>
    <dbReference type="NCBI Taxonomy" id="515621"/>
    <lineage>
        <taxon>Bacteria</taxon>
        <taxon>Bacillati</taxon>
        <taxon>Bacillota</taxon>
        <taxon>Clostridia</taxon>
        <taxon>Eubacteriales</taxon>
        <taxon>Clostridiaceae</taxon>
        <taxon>Clostridium</taxon>
    </lineage>
</organism>
<keyword id="KW-0066">ATP synthesis</keyword>
<keyword id="KW-1003">Cell membrane</keyword>
<keyword id="KW-0139">CF(1)</keyword>
<keyword id="KW-0375">Hydrogen ion transport</keyword>
<keyword id="KW-0406">Ion transport</keyword>
<keyword id="KW-0472">Membrane</keyword>
<keyword id="KW-0813">Transport</keyword>
<comment type="function">
    <text evidence="1">Produces ATP from ADP in the presence of a proton gradient across the membrane.</text>
</comment>
<comment type="subunit">
    <text evidence="1">F-type ATPases have 2 components, CF(1) - the catalytic core - and CF(0) - the membrane proton channel. CF(1) has five subunits: alpha(3), beta(3), gamma(1), delta(1), epsilon(1). CF(0) has three main subunits: a, b and c.</text>
</comment>
<comment type="subcellular location">
    <subcellularLocation>
        <location evidence="1">Cell membrane</location>
        <topology evidence="1">Peripheral membrane protein</topology>
    </subcellularLocation>
</comment>
<comment type="similarity">
    <text evidence="1">Belongs to the ATPase epsilon chain family.</text>
</comment>
<gene>
    <name evidence="1" type="primary">atpC</name>
    <name type="ordered locus">CLJ_B0196</name>
</gene>
<sequence length="133" mass="15239">MKDNIELTIFTPEKNIKIGEIKEVITEGLDGDLAILPNHVNMITYLKPTITKYIDLNGNKNNIFTSSGVLKVEDNKVYIICDASEKPEDIDIKRAENAKKRAEERLRNKKEIDVKRAELALFRSIARIKIKEL</sequence>